<evidence type="ECO:0000255" key="1">
    <source>
        <dbReference type="HAMAP-Rule" id="MF_00385"/>
    </source>
</evidence>
<evidence type="ECO:0000305" key="2"/>
<reference key="1">
    <citation type="journal article" date="2007" name="J. Bacteriol.">
        <title>Genome of the opportunistic pathogen Streptococcus sanguinis.</title>
        <authorList>
            <person name="Xu P."/>
            <person name="Alves J.M."/>
            <person name="Kitten T."/>
            <person name="Brown A."/>
            <person name="Chen Z."/>
            <person name="Ozaki L.S."/>
            <person name="Manque P."/>
            <person name="Ge X."/>
            <person name="Serrano M.G."/>
            <person name="Puiu D."/>
            <person name="Hendricks S."/>
            <person name="Wang Y."/>
            <person name="Chaplin M.D."/>
            <person name="Akan D."/>
            <person name="Paik S."/>
            <person name="Peterson D.L."/>
            <person name="Macrina F.L."/>
            <person name="Buck G.A."/>
        </authorList>
    </citation>
    <scope>NUCLEOTIDE SEQUENCE [LARGE SCALE GENOMIC DNA]</scope>
    <source>
        <strain>SK36</strain>
    </source>
</reference>
<name>RS16_STRSV</name>
<comment type="similarity">
    <text evidence="1">Belongs to the bacterial ribosomal protein bS16 family.</text>
</comment>
<feature type="chain" id="PRO_1000049364" description="Small ribosomal subunit protein bS16">
    <location>
        <begin position="1"/>
        <end position="90"/>
    </location>
</feature>
<protein>
    <recommendedName>
        <fullName evidence="1">Small ribosomal subunit protein bS16</fullName>
    </recommendedName>
    <alternativeName>
        <fullName evidence="2">30S ribosomal protein S16</fullName>
    </alternativeName>
</protein>
<keyword id="KW-1185">Reference proteome</keyword>
<keyword id="KW-0687">Ribonucleoprotein</keyword>
<keyword id="KW-0689">Ribosomal protein</keyword>
<gene>
    <name evidence="1" type="primary">rpsP</name>
    <name type="ordered locus">SSA_1310</name>
</gene>
<proteinExistence type="inferred from homology"/>
<sequence length="90" mass="10296">MAVKIRLTRMGSKKKPFYRINVADSRSPRDGRFIETVGTYNPLVAENQVTLKEDRILEWLGNGAQPSDTVRNILSKEGVLKKFHDSKYSK</sequence>
<dbReference type="EMBL" id="CP000387">
    <property type="protein sequence ID" value="ABN44709.1"/>
    <property type="molecule type" value="Genomic_DNA"/>
</dbReference>
<dbReference type="RefSeq" id="WP_002895310.1">
    <property type="nucleotide sequence ID" value="NZ_CAXTYR010000001.1"/>
</dbReference>
<dbReference type="RefSeq" id="YP_001035259.1">
    <property type="nucleotide sequence ID" value="NC_009009.1"/>
</dbReference>
<dbReference type="SMR" id="A3CNF4"/>
<dbReference type="STRING" id="388919.SSA_1310"/>
<dbReference type="KEGG" id="ssa:SSA_1310"/>
<dbReference type="PATRIC" id="fig|388919.9.peg.1247"/>
<dbReference type="eggNOG" id="COG0228">
    <property type="taxonomic scope" value="Bacteria"/>
</dbReference>
<dbReference type="HOGENOM" id="CLU_100590_5_0_9"/>
<dbReference type="OrthoDB" id="9807878at2"/>
<dbReference type="Proteomes" id="UP000002148">
    <property type="component" value="Chromosome"/>
</dbReference>
<dbReference type="GO" id="GO:0005737">
    <property type="term" value="C:cytoplasm"/>
    <property type="evidence" value="ECO:0007669"/>
    <property type="project" value="UniProtKB-ARBA"/>
</dbReference>
<dbReference type="GO" id="GO:0015935">
    <property type="term" value="C:small ribosomal subunit"/>
    <property type="evidence" value="ECO:0007669"/>
    <property type="project" value="TreeGrafter"/>
</dbReference>
<dbReference type="GO" id="GO:0003735">
    <property type="term" value="F:structural constituent of ribosome"/>
    <property type="evidence" value="ECO:0007669"/>
    <property type="project" value="InterPro"/>
</dbReference>
<dbReference type="GO" id="GO:0006412">
    <property type="term" value="P:translation"/>
    <property type="evidence" value="ECO:0007669"/>
    <property type="project" value="UniProtKB-UniRule"/>
</dbReference>
<dbReference type="FunFam" id="3.30.1320.10:FF:000002">
    <property type="entry name" value="30S ribosomal protein S16"/>
    <property type="match status" value="1"/>
</dbReference>
<dbReference type="Gene3D" id="3.30.1320.10">
    <property type="match status" value="1"/>
</dbReference>
<dbReference type="HAMAP" id="MF_00385">
    <property type="entry name" value="Ribosomal_bS16"/>
    <property type="match status" value="1"/>
</dbReference>
<dbReference type="InterPro" id="IPR000307">
    <property type="entry name" value="Ribosomal_bS16"/>
</dbReference>
<dbReference type="InterPro" id="IPR023803">
    <property type="entry name" value="Ribosomal_bS16_dom_sf"/>
</dbReference>
<dbReference type="NCBIfam" id="TIGR00002">
    <property type="entry name" value="S16"/>
    <property type="match status" value="1"/>
</dbReference>
<dbReference type="PANTHER" id="PTHR12919">
    <property type="entry name" value="30S RIBOSOMAL PROTEIN S16"/>
    <property type="match status" value="1"/>
</dbReference>
<dbReference type="PANTHER" id="PTHR12919:SF20">
    <property type="entry name" value="SMALL RIBOSOMAL SUBUNIT PROTEIN BS16M"/>
    <property type="match status" value="1"/>
</dbReference>
<dbReference type="Pfam" id="PF00886">
    <property type="entry name" value="Ribosomal_S16"/>
    <property type="match status" value="1"/>
</dbReference>
<dbReference type="SUPFAM" id="SSF54565">
    <property type="entry name" value="Ribosomal protein S16"/>
    <property type="match status" value="1"/>
</dbReference>
<accession>A3CNF4</accession>
<organism>
    <name type="scientific">Streptococcus sanguinis (strain SK36)</name>
    <dbReference type="NCBI Taxonomy" id="388919"/>
    <lineage>
        <taxon>Bacteria</taxon>
        <taxon>Bacillati</taxon>
        <taxon>Bacillota</taxon>
        <taxon>Bacilli</taxon>
        <taxon>Lactobacillales</taxon>
        <taxon>Streptococcaceae</taxon>
        <taxon>Streptococcus</taxon>
    </lineage>
</organism>